<evidence type="ECO:0000250" key="1"/>
<evidence type="ECO:0000255" key="2"/>
<evidence type="ECO:0000305" key="3"/>
<evidence type="ECO:0007829" key="4">
    <source>
        <dbReference type="PDB" id="9GTX"/>
    </source>
</evidence>
<organism>
    <name type="scientific">Helicobacter pylori (strain J99 / ATCC 700824)</name>
    <name type="common">Campylobacter pylori J99</name>
    <dbReference type="NCBI Taxonomy" id="85963"/>
    <lineage>
        <taxon>Bacteria</taxon>
        <taxon>Pseudomonadati</taxon>
        <taxon>Campylobacterota</taxon>
        <taxon>Epsilonproteobacteria</taxon>
        <taxon>Campylobacterales</taxon>
        <taxon>Helicobacteraceae</taxon>
        <taxon>Helicobacter</taxon>
    </lineage>
</organism>
<sequence>MKAFLKICMVLIFVGVAHAKNPLTLSKEEEVLQNLQSFSAHFKQVLKNEKPLVYYGVLKAKAPNWALWVYEKPLKKEIYMNDKEVVVYEPNLFQATITPLKDKTDFFTILKQLKKQTDGSFKTTINKTTYRLVFKDGKPFSLEFKDDMNNLVTITFSQAEINPKIPNEIFVFNPKDENIDIVRQ</sequence>
<gene>
    <name type="primary">lolA</name>
    <name type="ordered locus">jhp_0722</name>
</gene>
<proteinExistence type="evidence at protein level"/>
<dbReference type="EMBL" id="AE001439">
    <property type="protein sequence ID" value="AAD06296.1"/>
    <property type="molecule type" value="Genomic_DNA"/>
</dbReference>
<dbReference type="PIR" id="B71897">
    <property type="entry name" value="B71897"/>
</dbReference>
<dbReference type="RefSeq" id="WP_000643052.1">
    <property type="nucleotide sequence ID" value="NC_000921.1"/>
</dbReference>
<dbReference type="PDB" id="9GTX">
    <property type="method" value="X-ray"/>
    <property type="resolution" value="2.04 A"/>
    <property type="chains" value="A/B=20-184"/>
</dbReference>
<dbReference type="PDBsum" id="9GTX"/>
<dbReference type="SMR" id="Q9ZL58"/>
<dbReference type="KEGG" id="hpj:jhp_0722"/>
<dbReference type="PATRIC" id="fig|85963.30.peg.254"/>
<dbReference type="eggNOG" id="COG2834">
    <property type="taxonomic scope" value="Bacteria"/>
</dbReference>
<dbReference type="Proteomes" id="UP000000804">
    <property type="component" value="Chromosome"/>
</dbReference>
<dbReference type="GO" id="GO:0042597">
    <property type="term" value="C:periplasmic space"/>
    <property type="evidence" value="ECO:0007669"/>
    <property type="project" value="UniProtKB-SubCell"/>
</dbReference>
<dbReference type="GO" id="GO:0042953">
    <property type="term" value="P:lipoprotein transport"/>
    <property type="evidence" value="ECO:0007669"/>
    <property type="project" value="InterPro"/>
</dbReference>
<dbReference type="CDD" id="cd16325">
    <property type="entry name" value="LolA"/>
    <property type="match status" value="1"/>
</dbReference>
<dbReference type="FunFam" id="2.50.20.10:FF:000013">
    <property type="entry name" value="Outer-membrane lipoprotein carrier protein"/>
    <property type="match status" value="1"/>
</dbReference>
<dbReference type="Gene3D" id="2.50.20.10">
    <property type="entry name" value="Lipoprotein localisation LolA/LolB/LppX"/>
    <property type="match status" value="2"/>
</dbReference>
<dbReference type="HAMAP" id="MF_00240">
    <property type="entry name" value="LolA"/>
    <property type="match status" value="1"/>
</dbReference>
<dbReference type="InterPro" id="IPR029046">
    <property type="entry name" value="LolA/LolB/LppX"/>
</dbReference>
<dbReference type="InterPro" id="IPR004564">
    <property type="entry name" value="OM_lipoprot_carrier_LolA-like"/>
</dbReference>
<dbReference type="InterPro" id="IPR018323">
    <property type="entry name" value="OM_lipoprot_carrier_LolA_Pbac"/>
</dbReference>
<dbReference type="NCBIfam" id="NF000663">
    <property type="entry name" value="PRK00031.2-1"/>
    <property type="match status" value="1"/>
</dbReference>
<dbReference type="PANTHER" id="PTHR35869">
    <property type="entry name" value="OUTER-MEMBRANE LIPOPROTEIN CARRIER PROTEIN"/>
    <property type="match status" value="1"/>
</dbReference>
<dbReference type="PANTHER" id="PTHR35869:SF1">
    <property type="entry name" value="OUTER-MEMBRANE LIPOPROTEIN CARRIER PROTEIN"/>
    <property type="match status" value="1"/>
</dbReference>
<dbReference type="Pfam" id="PF03548">
    <property type="entry name" value="LolA"/>
    <property type="match status" value="1"/>
</dbReference>
<dbReference type="SUPFAM" id="SSF89392">
    <property type="entry name" value="Prokaryotic lipoproteins and lipoprotein localization factors"/>
    <property type="match status" value="1"/>
</dbReference>
<accession>Q9ZL58</accession>
<name>LOLA_HELPJ</name>
<protein>
    <recommendedName>
        <fullName>Outer-membrane lipoprotein carrier protein</fullName>
    </recommendedName>
</protein>
<keyword id="KW-0002">3D-structure</keyword>
<keyword id="KW-0143">Chaperone</keyword>
<keyword id="KW-0574">Periplasm</keyword>
<keyword id="KW-0653">Protein transport</keyword>
<keyword id="KW-0732">Signal</keyword>
<keyword id="KW-0813">Transport</keyword>
<comment type="function">
    <text evidence="1">Participates in the translocation of lipoproteins from the inner membrane to the outer membrane. Only forms a complex with a lipoprotein if the residue after the N-terminal Cys is not an aspartate (The Asp acts as a targeting signal to indicate that the lipoprotein should stay in the inner membrane) (By similarity).</text>
</comment>
<comment type="subunit">
    <text evidence="1">Monomer.</text>
</comment>
<comment type="subcellular location">
    <subcellularLocation>
        <location evidence="1">Periplasm</location>
    </subcellularLocation>
</comment>
<comment type="similarity">
    <text evidence="3">Belongs to the LolA family.</text>
</comment>
<feature type="signal peptide" evidence="2">
    <location>
        <begin position="1"/>
        <end position="19"/>
    </location>
</feature>
<feature type="chain" id="PRO_0000018263" description="Outer-membrane lipoprotein carrier protein">
    <location>
        <begin position="20"/>
        <end position="184"/>
    </location>
</feature>
<feature type="helix" evidence="4">
    <location>
        <begin position="27"/>
        <end position="34"/>
    </location>
</feature>
<feature type="strand" evidence="4">
    <location>
        <begin position="37"/>
        <end position="46"/>
    </location>
</feature>
<feature type="strand" evidence="4">
    <location>
        <begin position="48"/>
        <end position="50"/>
    </location>
</feature>
<feature type="strand" evidence="4">
    <location>
        <begin position="53"/>
        <end position="61"/>
    </location>
</feature>
<feature type="turn" evidence="4">
    <location>
        <begin position="62"/>
        <end position="64"/>
    </location>
</feature>
<feature type="strand" evidence="4">
    <location>
        <begin position="65"/>
        <end position="74"/>
    </location>
</feature>
<feature type="strand" evidence="4">
    <location>
        <begin position="76"/>
        <end position="80"/>
    </location>
</feature>
<feature type="strand" evidence="4">
    <location>
        <begin position="82"/>
        <end position="89"/>
    </location>
</feature>
<feature type="turn" evidence="4">
    <location>
        <begin position="90"/>
        <end position="93"/>
    </location>
</feature>
<feature type="strand" evidence="4">
    <location>
        <begin position="94"/>
        <end position="99"/>
    </location>
</feature>
<feature type="helix" evidence="4">
    <location>
        <begin position="106"/>
        <end position="112"/>
    </location>
</feature>
<feature type="strand" evidence="4">
    <location>
        <begin position="121"/>
        <end position="125"/>
    </location>
</feature>
<feature type="strand" evidence="4">
    <location>
        <begin position="128"/>
        <end position="135"/>
    </location>
</feature>
<feature type="strand" evidence="4">
    <location>
        <begin position="138"/>
        <end position="145"/>
    </location>
</feature>
<feature type="strand" evidence="4">
    <location>
        <begin position="151"/>
        <end position="162"/>
    </location>
</feature>
<feature type="helix" evidence="4">
    <location>
        <begin position="167"/>
        <end position="170"/>
    </location>
</feature>
<feature type="strand" evidence="4">
    <location>
        <begin position="180"/>
        <end position="183"/>
    </location>
</feature>
<reference key="1">
    <citation type="journal article" date="1999" name="Nature">
        <title>Genomic sequence comparison of two unrelated isolates of the human gastric pathogen Helicobacter pylori.</title>
        <authorList>
            <person name="Alm R.A."/>
            <person name="Ling L.-S.L."/>
            <person name="Moir D.T."/>
            <person name="King B.L."/>
            <person name="Brown E.D."/>
            <person name="Doig P.C."/>
            <person name="Smith D.R."/>
            <person name="Noonan B."/>
            <person name="Guild B.C."/>
            <person name="deJonge B.L."/>
            <person name="Carmel G."/>
            <person name="Tummino P.J."/>
            <person name="Caruso A."/>
            <person name="Uria-Nickelsen M."/>
            <person name="Mills D.M."/>
            <person name="Ives C."/>
            <person name="Gibson R."/>
            <person name="Merberg D."/>
            <person name="Mills S.D."/>
            <person name="Jiang Q."/>
            <person name="Taylor D.E."/>
            <person name="Vovis G.F."/>
            <person name="Trust T.J."/>
        </authorList>
    </citation>
    <scope>NUCLEOTIDE SEQUENCE [LARGE SCALE GENOMIC DNA]</scope>
    <source>
        <strain>J99 / ATCC 700824</strain>
    </source>
</reference>